<dbReference type="EMBL" id="FM204884">
    <property type="protein sequence ID" value="CAW97686.1"/>
    <property type="molecule type" value="Genomic_DNA"/>
</dbReference>
<dbReference type="SMR" id="C0ME29"/>
<dbReference type="KEGG" id="seq:SZO_00740"/>
<dbReference type="eggNOG" id="COG0099">
    <property type="taxonomic scope" value="Bacteria"/>
</dbReference>
<dbReference type="HOGENOM" id="CLU_103849_1_1_9"/>
<dbReference type="Proteomes" id="UP000001368">
    <property type="component" value="Chromosome"/>
</dbReference>
<dbReference type="GO" id="GO:0005829">
    <property type="term" value="C:cytosol"/>
    <property type="evidence" value="ECO:0007669"/>
    <property type="project" value="TreeGrafter"/>
</dbReference>
<dbReference type="GO" id="GO:0015935">
    <property type="term" value="C:small ribosomal subunit"/>
    <property type="evidence" value="ECO:0007669"/>
    <property type="project" value="TreeGrafter"/>
</dbReference>
<dbReference type="GO" id="GO:0019843">
    <property type="term" value="F:rRNA binding"/>
    <property type="evidence" value="ECO:0007669"/>
    <property type="project" value="UniProtKB-UniRule"/>
</dbReference>
<dbReference type="GO" id="GO:0003735">
    <property type="term" value="F:structural constituent of ribosome"/>
    <property type="evidence" value="ECO:0007669"/>
    <property type="project" value="InterPro"/>
</dbReference>
<dbReference type="GO" id="GO:0000049">
    <property type="term" value="F:tRNA binding"/>
    <property type="evidence" value="ECO:0007669"/>
    <property type="project" value="UniProtKB-UniRule"/>
</dbReference>
<dbReference type="GO" id="GO:0006412">
    <property type="term" value="P:translation"/>
    <property type="evidence" value="ECO:0007669"/>
    <property type="project" value="UniProtKB-UniRule"/>
</dbReference>
<dbReference type="FunFam" id="1.10.8.50:FF:000001">
    <property type="entry name" value="30S ribosomal protein S13"/>
    <property type="match status" value="1"/>
</dbReference>
<dbReference type="FunFam" id="4.10.910.10:FF:000001">
    <property type="entry name" value="30S ribosomal protein S13"/>
    <property type="match status" value="1"/>
</dbReference>
<dbReference type="Gene3D" id="1.10.8.50">
    <property type="match status" value="1"/>
</dbReference>
<dbReference type="Gene3D" id="4.10.910.10">
    <property type="entry name" value="30s ribosomal protein s13, domain 2"/>
    <property type="match status" value="1"/>
</dbReference>
<dbReference type="HAMAP" id="MF_01315">
    <property type="entry name" value="Ribosomal_uS13"/>
    <property type="match status" value="1"/>
</dbReference>
<dbReference type="InterPro" id="IPR027437">
    <property type="entry name" value="Rbsml_uS13_C"/>
</dbReference>
<dbReference type="InterPro" id="IPR001892">
    <property type="entry name" value="Ribosomal_uS13"/>
</dbReference>
<dbReference type="InterPro" id="IPR010979">
    <property type="entry name" value="Ribosomal_uS13-like_H2TH"/>
</dbReference>
<dbReference type="InterPro" id="IPR019980">
    <property type="entry name" value="Ribosomal_uS13_bac-type"/>
</dbReference>
<dbReference type="InterPro" id="IPR018269">
    <property type="entry name" value="Ribosomal_uS13_CS"/>
</dbReference>
<dbReference type="NCBIfam" id="TIGR03631">
    <property type="entry name" value="uS13_bact"/>
    <property type="match status" value="1"/>
</dbReference>
<dbReference type="PANTHER" id="PTHR10871">
    <property type="entry name" value="30S RIBOSOMAL PROTEIN S13/40S RIBOSOMAL PROTEIN S18"/>
    <property type="match status" value="1"/>
</dbReference>
<dbReference type="PANTHER" id="PTHR10871:SF1">
    <property type="entry name" value="SMALL RIBOSOMAL SUBUNIT PROTEIN US13M"/>
    <property type="match status" value="1"/>
</dbReference>
<dbReference type="Pfam" id="PF00416">
    <property type="entry name" value="Ribosomal_S13"/>
    <property type="match status" value="1"/>
</dbReference>
<dbReference type="PIRSF" id="PIRSF002134">
    <property type="entry name" value="Ribosomal_S13"/>
    <property type="match status" value="1"/>
</dbReference>
<dbReference type="SUPFAM" id="SSF46946">
    <property type="entry name" value="S13-like H2TH domain"/>
    <property type="match status" value="1"/>
</dbReference>
<dbReference type="PROSITE" id="PS00646">
    <property type="entry name" value="RIBOSOMAL_S13_1"/>
    <property type="match status" value="1"/>
</dbReference>
<dbReference type="PROSITE" id="PS50159">
    <property type="entry name" value="RIBOSOMAL_S13_2"/>
    <property type="match status" value="1"/>
</dbReference>
<keyword id="KW-0687">Ribonucleoprotein</keyword>
<keyword id="KW-0689">Ribosomal protein</keyword>
<keyword id="KW-0694">RNA-binding</keyword>
<keyword id="KW-0699">rRNA-binding</keyword>
<keyword id="KW-0820">tRNA-binding</keyword>
<reference key="1">
    <citation type="journal article" date="2009" name="PLoS Pathog.">
        <title>Genomic evidence for the evolution of Streptococcus equi: host restriction, increased virulence, and genetic exchange with human pathogens.</title>
        <authorList>
            <person name="Holden M.T.G."/>
            <person name="Heather Z."/>
            <person name="Paillot R."/>
            <person name="Steward K.F."/>
            <person name="Webb K."/>
            <person name="Ainslie F."/>
            <person name="Jourdan T."/>
            <person name="Bason N.C."/>
            <person name="Holroyd N.E."/>
            <person name="Mungall K."/>
            <person name="Quail M.A."/>
            <person name="Sanders M."/>
            <person name="Simmonds M."/>
            <person name="Willey D."/>
            <person name="Brooks K."/>
            <person name="Aanensen D.M."/>
            <person name="Spratt B.G."/>
            <person name="Jolley K.A."/>
            <person name="Maiden M.C.J."/>
            <person name="Kehoe M."/>
            <person name="Chanter N."/>
            <person name="Bentley S.D."/>
            <person name="Robinson C."/>
            <person name="Maskell D.J."/>
            <person name="Parkhill J."/>
            <person name="Waller A.S."/>
        </authorList>
    </citation>
    <scope>NUCLEOTIDE SEQUENCE [LARGE SCALE GENOMIC DNA]</scope>
    <source>
        <strain>H70</strain>
    </source>
</reference>
<feature type="chain" id="PRO_1000214407" description="Small ribosomal subunit protein uS13">
    <location>
        <begin position="1"/>
        <end position="121"/>
    </location>
</feature>
<feature type="region of interest" description="Disordered" evidence="2">
    <location>
        <begin position="95"/>
        <end position="121"/>
    </location>
</feature>
<feature type="compositionally biased region" description="Basic residues" evidence="2">
    <location>
        <begin position="106"/>
        <end position="121"/>
    </location>
</feature>
<proteinExistence type="inferred from homology"/>
<accession>C0ME29</accession>
<comment type="function">
    <text evidence="1">Located at the top of the head of the 30S subunit, it contacts several helices of the 16S rRNA. In the 70S ribosome it contacts the 23S rRNA (bridge B1a) and protein L5 of the 50S subunit (bridge B1b), connecting the 2 subunits; these bridges are implicated in subunit movement. Contacts the tRNAs in the A and P-sites.</text>
</comment>
<comment type="subunit">
    <text evidence="1">Part of the 30S ribosomal subunit. Forms a loose heterodimer with protein S19. Forms two bridges to the 50S subunit in the 70S ribosome.</text>
</comment>
<comment type="similarity">
    <text evidence="1">Belongs to the universal ribosomal protein uS13 family.</text>
</comment>
<gene>
    <name evidence="1" type="primary">rpsM</name>
    <name type="ordered locus">SZO_00740</name>
</gene>
<name>RS13_STRS7</name>
<organism>
    <name type="scientific">Streptococcus equi subsp. zooepidemicus (strain H70)</name>
    <dbReference type="NCBI Taxonomy" id="553483"/>
    <lineage>
        <taxon>Bacteria</taxon>
        <taxon>Bacillati</taxon>
        <taxon>Bacillota</taxon>
        <taxon>Bacilli</taxon>
        <taxon>Lactobacillales</taxon>
        <taxon>Streptococcaceae</taxon>
        <taxon>Streptococcus</taxon>
    </lineage>
</organism>
<evidence type="ECO:0000255" key="1">
    <source>
        <dbReference type="HAMAP-Rule" id="MF_01315"/>
    </source>
</evidence>
<evidence type="ECO:0000256" key="2">
    <source>
        <dbReference type="SAM" id="MobiDB-lite"/>
    </source>
</evidence>
<evidence type="ECO:0000305" key="3"/>
<protein>
    <recommendedName>
        <fullName evidence="1">Small ribosomal subunit protein uS13</fullName>
    </recommendedName>
    <alternativeName>
        <fullName evidence="3">30S ribosomal protein S13</fullName>
    </alternativeName>
</protein>
<sequence length="121" mass="13424">MARIAGVDIPNDKRVVISLTYVYGIGLATSKKILAAAGVSEDIRVKDLTSDQEDAIRREVDTIKVEGDLRREVNLNIKRLMEIGSYRGIRHRRGLPVRGQNTKNNARTRKGKAVAIAGKKK</sequence>